<organismHost>
    <name type="scientific">Pan troglodytes</name>
    <name type="common">Chimpanzee</name>
    <dbReference type="NCBI Taxonomy" id="9598"/>
</organismHost>
<feature type="chain" id="PRO_0000222320" description="Capsid protein">
    <location>
        <begin position="1"/>
        <end position="183"/>
    </location>
</feature>
<feature type="repeat" description="1; half-length">
    <location>
        <begin position="155"/>
        <end position="161"/>
    </location>
</feature>
<feature type="repeat" description="2">
    <location>
        <begin position="162"/>
        <end position="169"/>
    </location>
</feature>
<feature type="repeat" description="3">
    <location>
        <begin position="170"/>
        <end position="177"/>
    </location>
</feature>
<feature type="region of interest" description="Disordered" evidence="2">
    <location>
        <begin position="136"/>
        <end position="183"/>
    </location>
</feature>
<feature type="region of interest" description="3 X 8 AA repeats of S-P-R-R-R-[PR]-S-Q">
    <location>
        <begin position="155"/>
        <end position="177"/>
    </location>
</feature>
<feature type="region of interest" description="RNA binding" evidence="1">
    <location>
        <begin position="177"/>
        <end position="183"/>
    </location>
</feature>
<feature type="short sequence motif" description="Bipartite nuclear localization signal" evidence="1">
    <location>
        <begin position="158"/>
        <end position="175"/>
    </location>
</feature>
<feature type="compositionally biased region" description="Basic residues" evidence="2">
    <location>
        <begin position="149"/>
        <end position="176"/>
    </location>
</feature>
<feature type="modified residue" description="Phosphoserine; by host" evidence="1">
    <location>
        <position position="155"/>
    </location>
</feature>
<feature type="modified residue" description="Phosphoserine; by host" evidence="1">
    <location>
        <position position="162"/>
    </location>
</feature>
<feature type="modified residue" description="Phosphoserine; by host" evidence="1">
    <location>
        <position position="170"/>
    </location>
</feature>
<keyword id="KW-0002">3D-structure</keyword>
<keyword id="KW-0024">Alternative initiation</keyword>
<keyword id="KW-0167">Capsid protein</keyword>
<keyword id="KW-1176">Cytoplasmic inwards viral transport</keyword>
<keyword id="KW-0238">DNA-binding</keyword>
<keyword id="KW-1035">Host cytoplasm</keyword>
<keyword id="KW-0945">Host-virus interaction</keyword>
<keyword id="KW-1177">Microtubular inwards viral transport</keyword>
<keyword id="KW-0597">Phosphoprotein</keyword>
<keyword id="KW-0677">Repeat</keyword>
<keyword id="KW-0694">RNA-binding</keyword>
<keyword id="KW-1144">T=4 icosahedral capsid protein</keyword>
<keyword id="KW-1163">Viral penetration into host nucleus</keyword>
<keyword id="KW-0946">Virion</keyword>
<keyword id="KW-1160">Virus entry into host cell</keyword>
<gene>
    <name evidence="1" type="primary">C</name>
</gene>
<sequence>MDIDPYKEFGATVELLSFLPSDFFPSVRDLLDTASALYREALESPEHCSPNHTALRQAILCWGELMTLASWVGNNLEDPASREQVVNYVNTNMGLKIRQLLWFHISCLTFGRETVLEYLVSFGVWIRTPPAYRPPNAPILSTLPETTVVRRRGRSPRRRTPSPRRRRSQSPRRRRSQSPASQC</sequence>
<accession>P12901</accession>
<comment type="function">
    <text evidence="1">Self assembles to form an icosahedral capsid. Most capsids appear to be large particles with an icosahedral symmetry of T=4 and consist of 240 copies of capsid protein, though a fraction forms smaller T=3 particles consisting of 180 capsid proteins. Entering capsids are transported along microtubules to the nucleus. Phosphorylation of the capsid is thought to induce exposure of nuclear localization signal in the C-terminal portion of the capsid protein that allows binding to the nuclear pore complex via the importin (karyopherin-) alpha and beta. Capsids are imported in intact form through the nuclear pore into the nuclear basket, where it probably binds NUP153. Only capsids that contain the mature viral genome can release the viral DNA and capsid protein into the nucleoplasm. Immature capsids get stuck in the basket. Capsids encapsulate the pre-genomic RNA and the P protein. Pre-genomic RNA is reverse-transcribed into DNA while the capsid is still in the cytoplasm. The capsid can then either be directed to the nucleus, providing more genomes for transcription, or bud through the endoplasmic reticulum to provide new virions.</text>
</comment>
<comment type="subunit">
    <text evidence="1">Homodimerizes, then multimerizes. Interacts with cytosol exposed regions of viral L glycoprotein present in the reticulum-to-Golgi compartment. Interacts with human FLNB. Phosphorylated form interacts with host importin alpha; this interaction depends on the exposure of the NLS, which itself depends upon genome maturation and/or phosphorylation of the capsid protein. Interacts with host NUP153.</text>
</comment>
<comment type="subcellular location">
    <subcellularLocation>
        <location evidence="1">Virion</location>
    </subcellularLocation>
    <subcellularLocation>
        <location evidence="1">Host cytoplasm</location>
    </subcellularLocation>
</comment>
<comment type="alternative products">
    <event type="alternative initiation"/>
    <isoform>
        <id>P12901-1</id>
        <name>Capsid protein</name>
        <sequence type="displayed"/>
    </isoform>
    <isoform>
        <id>P0C6I7-1</id>
        <name>External core antigen</name>
        <sequence type="external"/>
    </isoform>
</comment>
<comment type="PTM">
    <text evidence="1">Phosphorylated by host SRPK1, SRPK2, and maybe protein kinase C or GAPDH. Phosphorylation is critical for pregenomic RNA packaging. Protein kinase C phosphorylation is stimulated by HBx protein and may play a role in transport of the viral genome to the nucleus at the late step during the viral replication cycle.</text>
</comment>
<comment type="similarity">
    <text evidence="1">Belongs to the orthohepadnavirus core antigen family.</text>
</comment>
<proteinExistence type="evidence at protein level"/>
<evidence type="ECO:0000255" key="1">
    <source>
        <dbReference type="HAMAP-Rule" id="MF_04076"/>
    </source>
</evidence>
<evidence type="ECO:0000256" key="2">
    <source>
        <dbReference type="SAM" id="MobiDB-lite"/>
    </source>
</evidence>
<organism>
    <name type="scientific">Chimpanzee hepatitis B virus (isolate United Kingdom/LSH/1988)</name>
    <name type="common">HBVcpz</name>
    <dbReference type="NCBI Taxonomy" id="10414"/>
    <lineage>
        <taxon>Viruses</taxon>
        <taxon>Riboviria</taxon>
        <taxon>Pararnavirae</taxon>
        <taxon>Artverviricota</taxon>
        <taxon>Revtraviricetes</taxon>
        <taxon>Blubervirales</taxon>
        <taxon>Hepadnaviridae</taxon>
        <taxon>Orthohepadnavirus</taxon>
        <taxon>Hepatitis B virus</taxon>
    </lineage>
</organism>
<reference key="1">
    <citation type="journal article" date="1988" name="J. Gen. Virol.">
        <title>The complete nucleotide sequence of the genome of a hepatitis B virus isolated from a naturally infected chimpanzee.</title>
        <authorList>
            <person name="Vaudin M."/>
            <person name="Wolstenholme A.J."/>
            <person name="Tsiquaye K.N."/>
            <person name="Zuckerman A.J."/>
            <person name="Harrison T.J."/>
        </authorList>
    </citation>
    <scope>NUCLEOTIDE SEQUENCE [GENOMIC DNA]</scope>
</reference>
<name>CAPSD_HBVCP</name>
<dbReference type="EMBL" id="D00220">
    <property type="protein sequence ID" value="BAA00157.1"/>
    <property type="molecule type" value="Genomic_DNA"/>
</dbReference>
<dbReference type="PIR" id="A28885">
    <property type="entry name" value="NKVLCP"/>
</dbReference>
<dbReference type="PDB" id="1HHH">
    <property type="method" value="X-ray"/>
    <property type="resolution" value="3.00 A"/>
    <property type="chains" value="C=18-27"/>
</dbReference>
<dbReference type="PDBsum" id="1HHH"/>
<dbReference type="SMR" id="P12901"/>
<dbReference type="EvolutionaryTrace" id="P12901"/>
<dbReference type="Proteomes" id="UP000007928">
    <property type="component" value="Segment"/>
</dbReference>
<dbReference type="GO" id="GO:0043657">
    <property type="term" value="C:host cell"/>
    <property type="evidence" value="ECO:0007669"/>
    <property type="project" value="GOC"/>
</dbReference>
<dbReference type="GO" id="GO:0030430">
    <property type="term" value="C:host cell cytoplasm"/>
    <property type="evidence" value="ECO:0007669"/>
    <property type="project" value="UniProtKB-SubCell"/>
</dbReference>
<dbReference type="GO" id="GO:0039619">
    <property type="term" value="C:T=4 icosahedral viral capsid"/>
    <property type="evidence" value="ECO:0007669"/>
    <property type="project" value="UniProtKB-UniRule"/>
</dbReference>
<dbReference type="GO" id="GO:0003677">
    <property type="term" value="F:DNA binding"/>
    <property type="evidence" value="ECO:0007669"/>
    <property type="project" value="UniProtKB-UniRule"/>
</dbReference>
<dbReference type="GO" id="GO:0003723">
    <property type="term" value="F:RNA binding"/>
    <property type="evidence" value="ECO:0007669"/>
    <property type="project" value="UniProtKB-UniRule"/>
</dbReference>
<dbReference type="GO" id="GO:0005198">
    <property type="term" value="F:structural molecule activity"/>
    <property type="evidence" value="ECO:0007669"/>
    <property type="project" value="UniProtKB-UniRule"/>
</dbReference>
<dbReference type="GO" id="GO:0075521">
    <property type="term" value="P:microtubule-dependent intracellular transport of viral material towards nucleus"/>
    <property type="evidence" value="ECO:0007669"/>
    <property type="project" value="UniProtKB-UniRule"/>
</dbReference>
<dbReference type="GO" id="GO:0046718">
    <property type="term" value="P:symbiont entry into host cell"/>
    <property type="evidence" value="ECO:0007669"/>
    <property type="project" value="UniProtKB-UniRule"/>
</dbReference>
<dbReference type="GO" id="GO:0075732">
    <property type="term" value="P:viral penetration into host nucleus"/>
    <property type="evidence" value="ECO:0007669"/>
    <property type="project" value="UniProtKB-UniRule"/>
</dbReference>
<dbReference type="FunFam" id="1.10.4090.10:FF:000001">
    <property type="entry name" value="Capsid protein"/>
    <property type="match status" value="1"/>
</dbReference>
<dbReference type="Gene3D" id="1.10.4090.10">
    <property type="entry name" value="Viral capsid, core domain supefamily, Hepatitis B virus"/>
    <property type="match status" value="1"/>
</dbReference>
<dbReference type="HAMAP" id="MF_04076">
    <property type="entry name" value="HBV_HBEAG"/>
    <property type="match status" value="1"/>
</dbReference>
<dbReference type="InterPro" id="IPR002006">
    <property type="entry name" value="Hepatitis_core"/>
</dbReference>
<dbReference type="InterPro" id="IPR036459">
    <property type="entry name" value="Viral_capsid_core_dom_sf_HBV"/>
</dbReference>
<dbReference type="Pfam" id="PF00906">
    <property type="entry name" value="Hepatitis_core"/>
    <property type="match status" value="2"/>
</dbReference>
<dbReference type="SUPFAM" id="SSF47852">
    <property type="entry name" value="Hepatitis B viral capsid (hbcag)"/>
    <property type="match status" value="1"/>
</dbReference>
<protein>
    <recommendedName>
        <fullName evidence="1">Capsid protein</fullName>
    </recommendedName>
    <alternativeName>
        <fullName evidence="1">Core antigen</fullName>
    </alternativeName>
    <alternativeName>
        <fullName evidence="1">Core protein</fullName>
    </alternativeName>
    <alternativeName>
        <fullName evidence="1">HBcAg</fullName>
    </alternativeName>
    <alternativeName>
        <fullName evidence="1">p21.5</fullName>
    </alternativeName>
</protein>